<comment type="function">
    <text evidence="1">Receptor that may play a role in the perception of bitterness and is gustducin-linked. May play a role in sensing the chemical composition of the gastrointestinal content. The activity of this receptor may stimulate alpha gustducin, mediate PLC-beta-2 activation and lead to the gating of TRPM5 (By similarity). In airway epithelial cells, binding of bitter compounds increases the intracellular calcium ion concentration and stimulates ciliary beat frequency (By similarity).</text>
</comment>
<comment type="subcellular location">
    <subcellularLocation>
        <location>Membrane</location>
        <topology>Multi-pass membrane protein</topology>
    </subcellularLocation>
    <subcellularLocation>
        <location>Cell projection</location>
        <location>Cilium membrane</location>
    </subcellularLocation>
    <text evidence="1">In airway epithelial cells, localizes to motile cilia.</text>
</comment>
<comment type="miscellaneous">
    <text>Most taste cells may be activated by a limited number of bitter compounds; individual taste cells can discriminate among bitter stimuli.</text>
</comment>
<comment type="similarity">
    <text evidence="3">Belongs to the G-protein coupled receptor T2R family.</text>
</comment>
<dbReference type="EMBL" id="AY724911">
    <property type="protein sequence ID" value="AAU21122.1"/>
    <property type="molecule type" value="Genomic_DNA"/>
</dbReference>
<dbReference type="SMR" id="Q645Z7"/>
<dbReference type="FunCoup" id="Q645Z7">
    <property type="interactions" value="210"/>
</dbReference>
<dbReference type="GlyCosmos" id="Q645Z7">
    <property type="glycosylation" value="1 site, No reported glycans"/>
</dbReference>
<dbReference type="eggNOG" id="ENOG502TE6U">
    <property type="taxonomic scope" value="Eukaryota"/>
</dbReference>
<dbReference type="InParanoid" id="Q645Z7"/>
<dbReference type="Proteomes" id="UP000001519">
    <property type="component" value="Unplaced"/>
</dbReference>
<dbReference type="GO" id="GO:0060170">
    <property type="term" value="C:ciliary membrane"/>
    <property type="evidence" value="ECO:0007669"/>
    <property type="project" value="UniProtKB-SubCell"/>
</dbReference>
<dbReference type="GO" id="GO:0016020">
    <property type="term" value="C:membrane"/>
    <property type="evidence" value="ECO:0000318"/>
    <property type="project" value="GO_Central"/>
</dbReference>
<dbReference type="GO" id="GO:0033038">
    <property type="term" value="F:bitter taste receptor activity"/>
    <property type="evidence" value="ECO:0000318"/>
    <property type="project" value="GO_Central"/>
</dbReference>
<dbReference type="GO" id="GO:0004930">
    <property type="term" value="F:G protein-coupled receptor activity"/>
    <property type="evidence" value="ECO:0007669"/>
    <property type="project" value="UniProtKB-KW"/>
</dbReference>
<dbReference type="GO" id="GO:0001580">
    <property type="term" value="P:detection of chemical stimulus involved in sensory perception of bitter taste"/>
    <property type="evidence" value="ECO:0000318"/>
    <property type="project" value="GO_Central"/>
</dbReference>
<dbReference type="CDD" id="cd15027">
    <property type="entry name" value="7tm_TAS2R43-like"/>
    <property type="match status" value="1"/>
</dbReference>
<dbReference type="FunFam" id="1.20.1070.10:FF:000042">
    <property type="entry name" value="Taste receptor type 2 member 7"/>
    <property type="match status" value="1"/>
</dbReference>
<dbReference type="Gene3D" id="1.20.1070.10">
    <property type="entry name" value="Rhodopsin 7-helix transmembrane proteins"/>
    <property type="match status" value="1"/>
</dbReference>
<dbReference type="InterPro" id="IPR007960">
    <property type="entry name" value="TAS2R"/>
</dbReference>
<dbReference type="PANTHER" id="PTHR11394">
    <property type="entry name" value="TASTE RECEPTOR TYPE 2"/>
    <property type="match status" value="1"/>
</dbReference>
<dbReference type="PANTHER" id="PTHR11394:SF66">
    <property type="entry name" value="TASTE RECEPTOR TYPE 2 MEMBER 46"/>
    <property type="match status" value="1"/>
</dbReference>
<dbReference type="Pfam" id="PF05296">
    <property type="entry name" value="TAS2R"/>
    <property type="match status" value="1"/>
</dbReference>
<dbReference type="SUPFAM" id="SSF81321">
    <property type="entry name" value="Family A G protein-coupled receptor-like"/>
    <property type="match status" value="1"/>
</dbReference>
<sequence>MITFLPIIFSILIVVTFVIGNFANGFIALANSIEWFKRQKISFADQILTALAVSRVGLLWVLLLNWYATELNPAFYSIEVRITAYNVWAVISHFSNWLATSLSIFYLLKIANFSNLIFLRLKRRVKSVVLVILLGPLLFLVCHLFVINMNQIIWTKEYEGNMTWKIKLRSAMYLSDTTVTILANLVPFTLTLISFLLLICSLCKHLKKMQLHGKGSQDPSMKVHIKALQTVTSFLLLCAIYFLSVIMSVWSFESLENKPVFMFCEAITFSYPSTHPFILIWGNKKLKQTFLSVLWHVRYWVKGEKPSSS</sequence>
<organism>
    <name type="scientific">Gorilla gorilla gorilla</name>
    <name type="common">Western lowland gorilla</name>
    <dbReference type="NCBI Taxonomy" id="9595"/>
    <lineage>
        <taxon>Eukaryota</taxon>
        <taxon>Metazoa</taxon>
        <taxon>Chordata</taxon>
        <taxon>Craniata</taxon>
        <taxon>Vertebrata</taxon>
        <taxon>Euteleostomi</taxon>
        <taxon>Mammalia</taxon>
        <taxon>Eutheria</taxon>
        <taxon>Euarchontoglires</taxon>
        <taxon>Primates</taxon>
        <taxon>Haplorrhini</taxon>
        <taxon>Catarrhini</taxon>
        <taxon>Hominidae</taxon>
        <taxon>Gorilla</taxon>
    </lineage>
</organism>
<name>T2R46_GORGO</name>
<keyword id="KW-1003">Cell membrane</keyword>
<keyword id="KW-0966">Cell projection</keyword>
<keyword id="KW-0969">Cilium</keyword>
<keyword id="KW-0297">G-protein coupled receptor</keyword>
<keyword id="KW-0325">Glycoprotein</keyword>
<keyword id="KW-0472">Membrane</keyword>
<keyword id="KW-0675">Receptor</keyword>
<keyword id="KW-1185">Reference proteome</keyword>
<keyword id="KW-0716">Sensory transduction</keyword>
<keyword id="KW-0919">Taste</keyword>
<keyword id="KW-0807">Transducer</keyword>
<keyword id="KW-0812">Transmembrane</keyword>
<keyword id="KW-1133">Transmembrane helix</keyword>
<reference key="1">
    <citation type="journal article" date="2005" name="Mol. Biol. Evol.">
        <title>Evolution of bitter taste receptors in humans and apes.</title>
        <authorList>
            <person name="Fischer A."/>
            <person name="Gilad Y."/>
            <person name="Man O."/>
            <person name="Paeaebo S."/>
        </authorList>
    </citation>
    <scope>NUCLEOTIDE SEQUENCE [GENOMIC DNA]</scope>
</reference>
<proteinExistence type="inferred from homology"/>
<evidence type="ECO:0000250" key="1"/>
<evidence type="ECO:0000255" key="2"/>
<evidence type="ECO:0000305" key="3"/>
<feature type="chain" id="PRO_0000082317" description="Taste receptor type 2 member 46">
    <location>
        <begin position="1"/>
        <end position="309"/>
    </location>
</feature>
<feature type="topological domain" description="Extracellular" evidence="2">
    <location>
        <position position="1"/>
    </location>
</feature>
<feature type="transmembrane region" description="Helical; Name=1" evidence="2">
    <location>
        <begin position="2"/>
        <end position="22"/>
    </location>
</feature>
<feature type="topological domain" description="Cytoplasmic" evidence="2">
    <location>
        <begin position="23"/>
        <end position="46"/>
    </location>
</feature>
<feature type="transmembrane region" description="Helical; Name=2" evidence="2">
    <location>
        <begin position="47"/>
        <end position="67"/>
    </location>
</feature>
<feature type="topological domain" description="Extracellular" evidence="2">
    <location>
        <begin position="68"/>
        <end position="86"/>
    </location>
</feature>
<feature type="transmembrane region" description="Helical; Name=3" evidence="2">
    <location>
        <begin position="87"/>
        <end position="107"/>
    </location>
</feature>
<feature type="topological domain" description="Cytoplasmic" evidence="2">
    <location>
        <begin position="108"/>
        <end position="126"/>
    </location>
</feature>
<feature type="transmembrane region" description="Helical; Name=4" evidence="2">
    <location>
        <begin position="127"/>
        <end position="147"/>
    </location>
</feature>
<feature type="topological domain" description="Extracellular" evidence="2">
    <location>
        <begin position="148"/>
        <end position="178"/>
    </location>
</feature>
<feature type="transmembrane region" description="Helical; Name=5" evidence="2">
    <location>
        <begin position="179"/>
        <end position="199"/>
    </location>
</feature>
<feature type="topological domain" description="Cytoplasmic" evidence="2">
    <location>
        <begin position="200"/>
        <end position="229"/>
    </location>
</feature>
<feature type="transmembrane region" description="Helical; Name=6" evidence="2">
    <location>
        <begin position="230"/>
        <end position="250"/>
    </location>
</feature>
<feature type="topological domain" description="Extracellular" evidence="2">
    <location>
        <begin position="251"/>
        <end position="259"/>
    </location>
</feature>
<feature type="transmembrane region" description="Helical; Name=7" evidence="2">
    <location>
        <begin position="260"/>
        <end position="280"/>
    </location>
</feature>
<feature type="topological domain" description="Cytoplasmic" evidence="2">
    <location>
        <begin position="281"/>
        <end position="309"/>
    </location>
</feature>
<feature type="glycosylation site" description="N-linked (GlcNAc...) asparagine" evidence="2">
    <location>
        <position position="161"/>
    </location>
</feature>
<gene>
    <name type="primary">TAS2R46</name>
</gene>
<protein>
    <recommendedName>
        <fullName>Taste receptor type 2 member 46</fullName>
        <shortName>T2R46</shortName>
    </recommendedName>
</protein>
<accession>Q645Z7</accession>